<comment type="function">
    <text evidence="1">Transcriptional regulator involved in defense response.</text>
</comment>
<comment type="subunit">
    <text evidence="5">Interacts with NPR5/NH4, NH5.1 and NH5.2.</text>
</comment>
<comment type="subcellular location">
    <subcellularLocation>
        <location evidence="2">Nucleus</location>
    </subcellularLocation>
</comment>
<comment type="similarity">
    <text evidence="8">Belongs to the bZIP family.</text>
</comment>
<comment type="sequence caution" evidence="8">
    <conflict type="erroneous gene model prediction">
        <sequence resource="EMBL-CDS" id="BAD25243"/>
    </conflict>
</comment>
<comment type="sequence caution" evidence="8">
    <conflict type="erroneous gene model prediction">
        <sequence resource="EMBL-CDS" id="BAS77444"/>
    </conflict>
</comment>
<comment type="sequence caution" evidence="8">
    <conflict type="erroneous gene model prediction">
        <sequence resource="EMBL-CDS" id="EEE56496"/>
    </conflict>
</comment>
<gene>
    <name evidence="7" type="primary">TGAL9</name>
    <name evidence="10" type="ordered locus">Os02g0194900</name>
    <name evidence="8" type="ordered locus">LOC_Os02g10140</name>
    <name evidence="9" type="ORF">OJ1225_F07.6</name>
    <name evidence="11" type="ORF">OsJ_05742</name>
</gene>
<dbReference type="EMBL" id="AP004184">
    <property type="protein sequence ID" value="BAD25243.1"/>
    <property type="status" value="ALT_SEQ"/>
    <property type="molecule type" value="Genomic_DNA"/>
</dbReference>
<dbReference type="EMBL" id="AP008208">
    <property type="protein sequence ID" value="BAF08096.2"/>
    <property type="molecule type" value="Genomic_DNA"/>
</dbReference>
<dbReference type="EMBL" id="AP014958">
    <property type="protein sequence ID" value="BAS77444.1"/>
    <property type="status" value="ALT_SEQ"/>
    <property type="molecule type" value="Genomic_DNA"/>
</dbReference>
<dbReference type="EMBL" id="CM000139">
    <property type="protein sequence ID" value="EEE56496.1"/>
    <property type="status" value="ALT_SEQ"/>
    <property type="molecule type" value="Genomic_DNA"/>
</dbReference>
<dbReference type="SMR" id="Q0E342"/>
<dbReference type="STRING" id="39947.Q0E342"/>
<dbReference type="PaxDb" id="39947-Q0E342"/>
<dbReference type="KEGG" id="dosa:Os02g0194900"/>
<dbReference type="InParanoid" id="Q0E342"/>
<dbReference type="Proteomes" id="UP000000763">
    <property type="component" value="Chromosome 2"/>
</dbReference>
<dbReference type="Proteomes" id="UP000007752">
    <property type="component" value="Chromosome 2"/>
</dbReference>
<dbReference type="Proteomes" id="UP000059680">
    <property type="component" value="Chromosome 2"/>
</dbReference>
<dbReference type="GO" id="GO:0005634">
    <property type="term" value="C:nucleus"/>
    <property type="evidence" value="ECO:0007669"/>
    <property type="project" value="UniProtKB-SubCell"/>
</dbReference>
<dbReference type="GO" id="GO:0003700">
    <property type="term" value="F:DNA-binding transcription factor activity"/>
    <property type="evidence" value="ECO:0007669"/>
    <property type="project" value="InterPro"/>
</dbReference>
<dbReference type="GO" id="GO:0043565">
    <property type="term" value="F:sequence-specific DNA binding"/>
    <property type="evidence" value="ECO:0007669"/>
    <property type="project" value="InterPro"/>
</dbReference>
<dbReference type="GO" id="GO:0006952">
    <property type="term" value="P:defense response"/>
    <property type="evidence" value="ECO:0007669"/>
    <property type="project" value="UniProtKB-KW"/>
</dbReference>
<dbReference type="GO" id="GO:0006351">
    <property type="term" value="P:DNA-templated transcription"/>
    <property type="evidence" value="ECO:0007669"/>
    <property type="project" value="InterPro"/>
</dbReference>
<dbReference type="FunFam" id="1.20.5.170:FF:000019">
    <property type="entry name" value="BZIP family transcription factor"/>
    <property type="match status" value="1"/>
</dbReference>
<dbReference type="Gene3D" id="1.20.5.170">
    <property type="match status" value="1"/>
</dbReference>
<dbReference type="InterPro" id="IPR004827">
    <property type="entry name" value="bZIP"/>
</dbReference>
<dbReference type="InterPro" id="IPR046347">
    <property type="entry name" value="bZIP_sf"/>
</dbReference>
<dbReference type="InterPro" id="IPR025422">
    <property type="entry name" value="TGA_domain"/>
</dbReference>
<dbReference type="PANTHER" id="PTHR45693:SF22">
    <property type="entry name" value="DOG1 DOMAIN-CONTAINING PROTEIN"/>
    <property type="match status" value="1"/>
</dbReference>
<dbReference type="PANTHER" id="PTHR45693">
    <property type="entry name" value="TRANSCRIPTION FACTOR TGA9"/>
    <property type="match status" value="1"/>
</dbReference>
<dbReference type="Pfam" id="PF00170">
    <property type="entry name" value="bZIP_1"/>
    <property type="match status" value="1"/>
</dbReference>
<dbReference type="Pfam" id="PF14144">
    <property type="entry name" value="DOG1"/>
    <property type="match status" value="1"/>
</dbReference>
<dbReference type="SMART" id="SM00338">
    <property type="entry name" value="BRLZ"/>
    <property type="match status" value="1"/>
</dbReference>
<dbReference type="SUPFAM" id="SSF57959">
    <property type="entry name" value="Leucine zipper domain"/>
    <property type="match status" value="1"/>
</dbReference>
<dbReference type="PROSITE" id="PS50217">
    <property type="entry name" value="BZIP"/>
    <property type="match status" value="1"/>
</dbReference>
<dbReference type="PROSITE" id="PS00036">
    <property type="entry name" value="BZIP_BASIC"/>
    <property type="match status" value="1"/>
</dbReference>
<dbReference type="PROSITE" id="PS51806">
    <property type="entry name" value="DOG1"/>
    <property type="match status" value="1"/>
</dbReference>
<evidence type="ECO:0000250" key="1">
    <source>
        <dbReference type="UniProtKB" id="Q7X993"/>
    </source>
</evidence>
<evidence type="ECO:0000255" key="2">
    <source>
        <dbReference type="PROSITE-ProRule" id="PRU00978"/>
    </source>
</evidence>
<evidence type="ECO:0000255" key="3">
    <source>
        <dbReference type="PROSITE-ProRule" id="PRU01147"/>
    </source>
</evidence>
<evidence type="ECO:0000256" key="4">
    <source>
        <dbReference type="SAM" id="MobiDB-lite"/>
    </source>
</evidence>
<evidence type="ECO:0000269" key="5">
    <source>
    </source>
</evidence>
<evidence type="ECO:0000303" key="6">
    <source>
    </source>
</evidence>
<evidence type="ECO:0000303" key="7">
    <source>
    </source>
</evidence>
<evidence type="ECO:0000305" key="8"/>
<evidence type="ECO:0000312" key="9">
    <source>
        <dbReference type="EMBL" id="BAD25243.1"/>
    </source>
</evidence>
<evidence type="ECO:0000312" key="10">
    <source>
        <dbReference type="EMBL" id="BAF08096.2"/>
    </source>
</evidence>
<evidence type="ECO:0000312" key="11">
    <source>
        <dbReference type="EMBL" id="EEE56496.1"/>
    </source>
</evidence>
<reference key="1">
    <citation type="journal article" date="2005" name="Nature">
        <title>The map-based sequence of the rice genome.</title>
        <authorList>
            <consortium name="International rice genome sequencing project (IRGSP)"/>
        </authorList>
    </citation>
    <scope>NUCLEOTIDE SEQUENCE [LARGE SCALE GENOMIC DNA]</scope>
    <source>
        <strain>cv. Nipponbare</strain>
    </source>
</reference>
<reference key="2">
    <citation type="journal article" date="2008" name="Nucleic Acids Res.">
        <title>The rice annotation project database (RAP-DB): 2008 update.</title>
        <authorList>
            <consortium name="The rice annotation project (RAP)"/>
        </authorList>
    </citation>
    <scope>GENOME REANNOTATION</scope>
    <source>
        <strain>cv. Nipponbare</strain>
    </source>
</reference>
<reference key="3">
    <citation type="journal article" date="2013" name="Rice">
        <title>Improvement of the Oryza sativa Nipponbare reference genome using next generation sequence and optical map data.</title>
        <authorList>
            <person name="Kawahara Y."/>
            <person name="de la Bastide M."/>
            <person name="Hamilton J.P."/>
            <person name="Kanamori H."/>
            <person name="McCombie W.R."/>
            <person name="Ouyang S."/>
            <person name="Schwartz D.C."/>
            <person name="Tanaka T."/>
            <person name="Wu J."/>
            <person name="Zhou S."/>
            <person name="Childs K.L."/>
            <person name="Davidson R.M."/>
            <person name="Lin H."/>
            <person name="Quesada-Ocampo L."/>
            <person name="Vaillancourt B."/>
            <person name="Sakai H."/>
            <person name="Lee S.S."/>
            <person name="Kim J."/>
            <person name="Numa H."/>
            <person name="Itoh T."/>
            <person name="Buell C.R."/>
            <person name="Matsumoto T."/>
        </authorList>
    </citation>
    <scope>GENOME REANNOTATION</scope>
    <source>
        <strain>cv. Nipponbare</strain>
    </source>
</reference>
<reference key="4">
    <citation type="journal article" date="2005" name="PLoS Biol.">
        <title>The genomes of Oryza sativa: a history of duplications.</title>
        <authorList>
            <person name="Yu J."/>
            <person name="Wang J."/>
            <person name="Lin W."/>
            <person name="Li S."/>
            <person name="Li H."/>
            <person name="Zhou J."/>
            <person name="Ni P."/>
            <person name="Dong W."/>
            <person name="Hu S."/>
            <person name="Zeng C."/>
            <person name="Zhang J."/>
            <person name="Zhang Y."/>
            <person name="Li R."/>
            <person name="Xu Z."/>
            <person name="Li S."/>
            <person name="Li X."/>
            <person name="Zheng H."/>
            <person name="Cong L."/>
            <person name="Lin L."/>
            <person name="Yin J."/>
            <person name="Geng J."/>
            <person name="Li G."/>
            <person name="Shi J."/>
            <person name="Liu J."/>
            <person name="Lv H."/>
            <person name="Li J."/>
            <person name="Wang J."/>
            <person name="Deng Y."/>
            <person name="Ran L."/>
            <person name="Shi X."/>
            <person name="Wang X."/>
            <person name="Wu Q."/>
            <person name="Li C."/>
            <person name="Ren X."/>
            <person name="Wang J."/>
            <person name="Wang X."/>
            <person name="Li D."/>
            <person name="Liu D."/>
            <person name="Zhang X."/>
            <person name="Ji Z."/>
            <person name="Zhao W."/>
            <person name="Sun Y."/>
            <person name="Zhang Z."/>
            <person name="Bao J."/>
            <person name="Han Y."/>
            <person name="Dong L."/>
            <person name="Ji J."/>
            <person name="Chen P."/>
            <person name="Wu S."/>
            <person name="Liu J."/>
            <person name="Xiao Y."/>
            <person name="Bu D."/>
            <person name="Tan J."/>
            <person name="Yang L."/>
            <person name="Ye C."/>
            <person name="Zhang J."/>
            <person name="Xu J."/>
            <person name="Zhou Y."/>
            <person name="Yu Y."/>
            <person name="Zhang B."/>
            <person name="Zhuang S."/>
            <person name="Wei H."/>
            <person name="Liu B."/>
            <person name="Lei M."/>
            <person name="Yu H."/>
            <person name="Li Y."/>
            <person name="Xu H."/>
            <person name="Wei S."/>
            <person name="He X."/>
            <person name="Fang L."/>
            <person name="Zhang Z."/>
            <person name="Zhang Y."/>
            <person name="Huang X."/>
            <person name="Su Z."/>
            <person name="Tong W."/>
            <person name="Li J."/>
            <person name="Tong Z."/>
            <person name="Li S."/>
            <person name="Ye J."/>
            <person name="Wang L."/>
            <person name="Fang L."/>
            <person name="Lei T."/>
            <person name="Chen C.-S."/>
            <person name="Chen H.-C."/>
            <person name="Xu Z."/>
            <person name="Li H."/>
            <person name="Huang H."/>
            <person name="Zhang F."/>
            <person name="Xu H."/>
            <person name="Li N."/>
            <person name="Zhao C."/>
            <person name="Li S."/>
            <person name="Dong L."/>
            <person name="Huang Y."/>
            <person name="Li L."/>
            <person name="Xi Y."/>
            <person name="Qi Q."/>
            <person name="Li W."/>
            <person name="Zhang B."/>
            <person name="Hu W."/>
            <person name="Zhang Y."/>
            <person name="Tian X."/>
            <person name="Jiao Y."/>
            <person name="Liang X."/>
            <person name="Jin J."/>
            <person name="Gao L."/>
            <person name="Zheng W."/>
            <person name="Hao B."/>
            <person name="Liu S.-M."/>
            <person name="Wang W."/>
            <person name="Yuan L."/>
            <person name="Cao M."/>
            <person name="McDermott J."/>
            <person name="Samudrala R."/>
            <person name="Wang J."/>
            <person name="Wong G.K.-S."/>
            <person name="Yang H."/>
        </authorList>
    </citation>
    <scope>NUCLEOTIDE SEQUENCE [LARGE SCALE GENOMIC DNA]</scope>
    <source>
        <strain>cv. Nipponbare</strain>
    </source>
</reference>
<reference key="5">
    <citation type="journal article" date="2008" name="Plant Physiol.">
        <title>Genomic survey and gene expression analysis of the basic leucine zipper transcription factor family in rice.</title>
        <authorList>
            <person name="Nijhawan A."/>
            <person name="Jain M."/>
            <person name="Tyagi A.K."/>
            <person name="Khurana J.P."/>
        </authorList>
    </citation>
    <scope>GENE FAMILY</scope>
    <scope>NOMENCLATURE</scope>
</reference>
<reference key="6">
    <citation type="journal article" date="2014" name="BMC Genomics">
        <title>Interaction specificity and coexpression of rice NPR1 homologs 1 and 3 (NH1 and NH3), TGA transcription factors and negative regulator of resistance (NRR) proteins.</title>
        <authorList>
            <person name="Chern M."/>
            <person name="Bai W."/>
            <person name="Ruan D."/>
            <person name="Oh T."/>
            <person name="Chen X."/>
            <person name="Ronald P.C."/>
        </authorList>
    </citation>
    <scope>INTERACTION WITH NPR5/NH4; NH5.1 AND NH5.2</scope>
</reference>
<name>TGAL9_ORYSJ</name>
<protein>
    <recommendedName>
        <fullName evidence="8">Transcription factor TGAL9</fullName>
    </recommendedName>
    <alternativeName>
        <fullName evidence="6">bZIP transcription factor 17</fullName>
        <shortName evidence="6">OsbZIP17</shortName>
    </alternativeName>
</protein>
<proteinExistence type="evidence at protein level"/>
<feature type="chain" id="PRO_0000437023" description="Transcription factor TGAL9">
    <location>
        <begin position="1"/>
        <end position="355"/>
    </location>
</feature>
<feature type="domain" description="bZIP" evidence="2">
    <location>
        <begin position="185"/>
        <end position="230"/>
    </location>
</feature>
<feature type="domain" description="DOG1" evidence="3">
    <location>
        <begin position="254"/>
        <end position="355"/>
    </location>
</feature>
<feature type="region of interest" description="Disordered" evidence="4">
    <location>
        <begin position="83"/>
        <end position="104"/>
    </location>
</feature>
<feature type="region of interest" description="Disordered" evidence="4">
    <location>
        <begin position="118"/>
        <end position="188"/>
    </location>
</feature>
<feature type="region of interest" description="Basic motif" evidence="2">
    <location>
        <begin position="187"/>
        <end position="207"/>
    </location>
</feature>
<feature type="region of interest" description="Leucine-zipper" evidence="2">
    <location>
        <begin position="213"/>
        <end position="227"/>
    </location>
</feature>
<feature type="compositionally biased region" description="Low complexity" evidence="4">
    <location>
        <begin position="118"/>
        <end position="134"/>
    </location>
</feature>
<feature type="compositionally biased region" description="Polar residues" evidence="4">
    <location>
        <begin position="135"/>
        <end position="144"/>
    </location>
</feature>
<feature type="compositionally biased region" description="Basic and acidic residues" evidence="4">
    <location>
        <begin position="148"/>
        <end position="159"/>
    </location>
</feature>
<feature type="compositionally biased region" description="Basic and acidic residues" evidence="4">
    <location>
        <begin position="176"/>
        <end position="188"/>
    </location>
</feature>
<sequence length="355" mass="37264">MGDRPWQQQLQPHDQQAASCSVTAGMMMQASATSSSIHGNNIIRKDPGGGYDMAELDHIFLYLNSQDQASAAIQEQPQTLNIFPSQPMHAGEPSPKGSSSMAAINSAPSNNALAIAAGSSKRPPAAAAAGGQPSRLNNPADQPSASGKDGKAAVVKKEGGGGGGKHHGGASSAAASEHEGPKTPDAKTLRRLAQNREAARKSRLRKKAYIQNLETSRIRLSQLEQELVQRSRTQGAILGGGAFSAGIGGQSPEAAWFDGEYARWVESHERMMAHMRAAVEEQPQHGGVAAAAAEAQLRQLVDAAVAHHGVLVELKAAVASADVFHLVSGTWLPAAERCFLWIGGFRPSELIKVST</sequence>
<keyword id="KW-0238">DNA-binding</keyword>
<keyword id="KW-0539">Nucleus</keyword>
<keyword id="KW-0611">Plant defense</keyword>
<keyword id="KW-1185">Reference proteome</keyword>
<keyword id="KW-0804">Transcription</keyword>
<keyword id="KW-0805">Transcription regulation</keyword>
<organism>
    <name type="scientific">Oryza sativa subsp. japonica</name>
    <name type="common">Rice</name>
    <dbReference type="NCBI Taxonomy" id="39947"/>
    <lineage>
        <taxon>Eukaryota</taxon>
        <taxon>Viridiplantae</taxon>
        <taxon>Streptophyta</taxon>
        <taxon>Embryophyta</taxon>
        <taxon>Tracheophyta</taxon>
        <taxon>Spermatophyta</taxon>
        <taxon>Magnoliopsida</taxon>
        <taxon>Liliopsida</taxon>
        <taxon>Poales</taxon>
        <taxon>Poaceae</taxon>
        <taxon>BOP clade</taxon>
        <taxon>Oryzoideae</taxon>
        <taxon>Oryzeae</taxon>
        <taxon>Oryzinae</taxon>
        <taxon>Oryza</taxon>
        <taxon>Oryza sativa</taxon>
    </lineage>
</organism>
<accession>Q0E342</accession>
<accession>A0A0P0VFX1</accession>
<accession>Q6H7Q7</accession>